<feature type="chain" id="PRO_1000185507" description="Proline--tRNA ligase">
    <location>
        <begin position="1"/>
        <end position="574"/>
    </location>
</feature>
<comment type="function">
    <text evidence="1">Catalyzes the attachment of proline to tRNA(Pro) in a two-step reaction: proline is first activated by ATP to form Pro-AMP and then transferred to the acceptor end of tRNA(Pro). As ProRS can inadvertently accommodate and process non-cognate amino acids such as alanine and cysteine, to avoid such errors it has two additional distinct editing activities against alanine. One activity is designated as 'pretransfer' editing and involves the tRNA(Pro)-independent hydrolysis of activated Ala-AMP. The other activity is designated 'posttransfer' editing and involves deacylation of mischarged Ala-tRNA(Pro). The misacylated Cys-tRNA(Pro) is not edited by ProRS.</text>
</comment>
<comment type="catalytic activity">
    <reaction evidence="1">
        <text>tRNA(Pro) + L-proline + ATP = L-prolyl-tRNA(Pro) + AMP + diphosphate</text>
        <dbReference type="Rhea" id="RHEA:14305"/>
        <dbReference type="Rhea" id="RHEA-COMP:9700"/>
        <dbReference type="Rhea" id="RHEA-COMP:9702"/>
        <dbReference type="ChEBI" id="CHEBI:30616"/>
        <dbReference type="ChEBI" id="CHEBI:33019"/>
        <dbReference type="ChEBI" id="CHEBI:60039"/>
        <dbReference type="ChEBI" id="CHEBI:78442"/>
        <dbReference type="ChEBI" id="CHEBI:78532"/>
        <dbReference type="ChEBI" id="CHEBI:456215"/>
        <dbReference type="EC" id="6.1.1.15"/>
    </reaction>
</comment>
<comment type="subunit">
    <text evidence="1">Homodimer.</text>
</comment>
<comment type="subcellular location">
    <subcellularLocation>
        <location evidence="1">Cytoplasm</location>
    </subcellularLocation>
</comment>
<comment type="domain">
    <text evidence="1">Consists of three domains: the N-terminal catalytic domain, the editing domain and the C-terminal anticodon-binding domain.</text>
</comment>
<comment type="similarity">
    <text evidence="1">Belongs to the class-II aminoacyl-tRNA synthetase family. ProS type 1 subfamily.</text>
</comment>
<proteinExistence type="inferred from homology"/>
<keyword id="KW-0030">Aminoacyl-tRNA synthetase</keyword>
<keyword id="KW-0067">ATP-binding</keyword>
<keyword id="KW-0963">Cytoplasm</keyword>
<keyword id="KW-0436">Ligase</keyword>
<keyword id="KW-0547">Nucleotide-binding</keyword>
<keyword id="KW-0648">Protein biosynthesis</keyword>
<organism>
    <name type="scientific">Nautilia profundicola (strain ATCC BAA-1463 / DSM 18972 / AmH)</name>
    <dbReference type="NCBI Taxonomy" id="598659"/>
    <lineage>
        <taxon>Bacteria</taxon>
        <taxon>Pseudomonadati</taxon>
        <taxon>Campylobacterota</taxon>
        <taxon>Epsilonproteobacteria</taxon>
        <taxon>Nautiliales</taxon>
        <taxon>Nautiliaceae</taxon>
        <taxon>Nautilia</taxon>
    </lineage>
</organism>
<protein>
    <recommendedName>
        <fullName evidence="1">Proline--tRNA ligase</fullName>
        <ecNumber evidence="1">6.1.1.15</ecNumber>
    </recommendedName>
    <alternativeName>
        <fullName evidence="1">Prolyl-tRNA synthetase</fullName>
        <shortName evidence="1">ProRS</shortName>
    </alternativeName>
</protein>
<accession>B9LA07</accession>
<gene>
    <name evidence="1" type="primary">proS</name>
    <name type="ordered locus">NAMH_1066</name>
</gene>
<dbReference type="EC" id="6.1.1.15" evidence="1"/>
<dbReference type="EMBL" id="CP001279">
    <property type="protein sequence ID" value="ACM92559.1"/>
    <property type="molecule type" value="Genomic_DNA"/>
</dbReference>
<dbReference type="RefSeq" id="WP_012663930.1">
    <property type="nucleotide sequence ID" value="NC_012115.1"/>
</dbReference>
<dbReference type="SMR" id="B9LA07"/>
<dbReference type="STRING" id="598659.NAMH_1066"/>
<dbReference type="KEGG" id="nam:NAMH_1066"/>
<dbReference type="eggNOG" id="COG0442">
    <property type="taxonomic scope" value="Bacteria"/>
</dbReference>
<dbReference type="HOGENOM" id="CLU_016739_0_0_7"/>
<dbReference type="OrthoDB" id="9809052at2"/>
<dbReference type="Proteomes" id="UP000000448">
    <property type="component" value="Chromosome"/>
</dbReference>
<dbReference type="GO" id="GO:0005829">
    <property type="term" value="C:cytosol"/>
    <property type="evidence" value="ECO:0007669"/>
    <property type="project" value="TreeGrafter"/>
</dbReference>
<dbReference type="GO" id="GO:0002161">
    <property type="term" value="F:aminoacyl-tRNA deacylase activity"/>
    <property type="evidence" value="ECO:0007669"/>
    <property type="project" value="InterPro"/>
</dbReference>
<dbReference type="GO" id="GO:0005524">
    <property type="term" value="F:ATP binding"/>
    <property type="evidence" value="ECO:0007669"/>
    <property type="project" value="UniProtKB-UniRule"/>
</dbReference>
<dbReference type="GO" id="GO:0004827">
    <property type="term" value="F:proline-tRNA ligase activity"/>
    <property type="evidence" value="ECO:0007669"/>
    <property type="project" value="UniProtKB-UniRule"/>
</dbReference>
<dbReference type="GO" id="GO:0006433">
    <property type="term" value="P:prolyl-tRNA aminoacylation"/>
    <property type="evidence" value="ECO:0007669"/>
    <property type="project" value="UniProtKB-UniRule"/>
</dbReference>
<dbReference type="CDD" id="cd04334">
    <property type="entry name" value="ProRS-INS"/>
    <property type="match status" value="1"/>
</dbReference>
<dbReference type="CDD" id="cd00861">
    <property type="entry name" value="ProRS_anticodon_short"/>
    <property type="match status" value="1"/>
</dbReference>
<dbReference type="CDD" id="cd00779">
    <property type="entry name" value="ProRS_core_prok"/>
    <property type="match status" value="1"/>
</dbReference>
<dbReference type="FunFam" id="3.30.930.10:FF:000062">
    <property type="entry name" value="Proline--tRNA ligase"/>
    <property type="match status" value="1"/>
</dbReference>
<dbReference type="FunFam" id="3.30.930.10:FF:000066">
    <property type="entry name" value="Proline--tRNA ligase"/>
    <property type="match status" value="1"/>
</dbReference>
<dbReference type="Gene3D" id="3.40.50.800">
    <property type="entry name" value="Anticodon-binding domain"/>
    <property type="match status" value="1"/>
</dbReference>
<dbReference type="Gene3D" id="3.30.930.10">
    <property type="entry name" value="Bira Bifunctional Protein, Domain 2"/>
    <property type="match status" value="2"/>
</dbReference>
<dbReference type="HAMAP" id="MF_01569">
    <property type="entry name" value="Pro_tRNA_synth_type1"/>
    <property type="match status" value="1"/>
</dbReference>
<dbReference type="InterPro" id="IPR002314">
    <property type="entry name" value="aa-tRNA-synt_IIb"/>
</dbReference>
<dbReference type="InterPro" id="IPR006195">
    <property type="entry name" value="aa-tRNA-synth_II"/>
</dbReference>
<dbReference type="InterPro" id="IPR045864">
    <property type="entry name" value="aa-tRNA-synth_II/BPL/LPL"/>
</dbReference>
<dbReference type="InterPro" id="IPR004154">
    <property type="entry name" value="Anticodon-bd"/>
</dbReference>
<dbReference type="InterPro" id="IPR036621">
    <property type="entry name" value="Anticodon-bd_dom_sf"/>
</dbReference>
<dbReference type="InterPro" id="IPR002316">
    <property type="entry name" value="Pro-tRNA-ligase_IIa"/>
</dbReference>
<dbReference type="InterPro" id="IPR004500">
    <property type="entry name" value="Pro-tRNA-synth_IIa_bac-type"/>
</dbReference>
<dbReference type="InterPro" id="IPR023717">
    <property type="entry name" value="Pro-tRNA-Synthase_IIa_type1"/>
</dbReference>
<dbReference type="InterPro" id="IPR050062">
    <property type="entry name" value="Pro-tRNA_synthetase"/>
</dbReference>
<dbReference type="InterPro" id="IPR044140">
    <property type="entry name" value="ProRS_anticodon_short"/>
</dbReference>
<dbReference type="InterPro" id="IPR033730">
    <property type="entry name" value="ProRS_core_prok"/>
</dbReference>
<dbReference type="InterPro" id="IPR036754">
    <property type="entry name" value="YbaK/aa-tRNA-synt-asso_dom_sf"/>
</dbReference>
<dbReference type="InterPro" id="IPR007214">
    <property type="entry name" value="YbaK/aa-tRNA-synth-assoc-dom"/>
</dbReference>
<dbReference type="NCBIfam" id="NF006625">
    <property type="entry name" value="PRK09194.1"/>
    <property type="match status" value="1"/>
</dbReference>
<dbReference type="NCBIfam" id="TIGR00409">
    <property type="entry name" value="proS_fam_II"/>
    <property type="match status" value="1"/>
</dbReference>
<dbReference type="PANTHER" id="PTHR42753">
    <property type="entry name" value="MITOCHONDRIAL RIBOSOME PROTEIN L39/PROLYL-TRNA LIGASE FAMILY MEMBER"/>
    <property type="match status" value="1"/>
</dbReference>
<dbReference type="PANTHER" id="PTHR42753:SF2">
    <property type="entry name" value="PROLINE--TRNA LIGASE"/>
    <property type="match status" value="1"/>
</dbReference>
<dbReference type="Pfam" id="PF03129">
    <property type="entry name" value="HGTP_anticodon"/>
    <property type="match status" value="1"/>
</dbReference>
<dbReference type="Pfam" id="PF00587">
    <property type="entry name" value="tRNA-synt_2b"/>
    <property type="match status" value="1"/>
</dbReference>
<dbReference type="Pfam" id="PF04073">
    <property type="entry name" value="tRNA_edit"/>
    <property type="match status" value="1"/>
</dbReference>
<dbReference type="PRINTS" id="PR01046">
    <property type="entry name" value="TRNASYNTHPRO"/>
</dbReference>
<dbReference type="SUPFAM" id="SSF52954">
    <property type="entry name" value="Class II aaRS ABD-related"/>
    <property type="match status" value="1"/>
</dbReference>
<dbReference type="SUPFAM" id="SSF55681">
    <property type="entry name" value="Class II aaRS and biotin synthetases"/>
    <property type="match status" value="1"/>
</dbReference>
<dbReference type="SUPFAM" id="SSF55826">
    <property type="entry name" value="YbaK/ProRS associated domain"/>
    <property type="match status" value="1"/>
</dbReference>
<dbReference type="PROSITE" id="PS50862">
    <property type="entry name" value="AA_TRNA_LIGASE_II"/>
    <property type="match status" value="1"/>
</dbReference>
<name>SYP_NAUPA</name>
<sequence>MRWSRFFAYTQKEAPKDAVVASHKYLVRGGYIKQVAAGIYDFAPLGKMVLDNIRDIIKKEMDASGAQEVMLTFVTPNELWEETGRAKKYGKELLRIKDRKDQSFVLAPTNEESVVDLVRGTIKSYKQLPVNLYQINLKFRDEARPRFGLLRGREFIMKDAYSFHATEEDLDREFNLMEETYKNIFTKLGLDFRAVWADSGAIGGSGSKEFMVLADTGEDDIVVCSECDYAANIEVATRKHEKRENPVKTEVIEEVHTPDMKSIEDVCNFIGVDPYFSIKAVVKKAIYDDGKSEIVVFFVRGTDTLEETKATNAVGALELVDASEEELEAVGLVPGFIGPFGLPSSVRYIIDDDLRMAEELVCGANKKDYHIKGAGLLDANLLGNLTVYRDIAAVKEGDKCPKCGAPLKITKGIEVGHIFKLGTVYSEPMNATFLDENGKAKPFIMGCYGIGVSRLISAAIEQNHDDKGIIWPKQIAPFVVDIIVGDVKKDEQLIFAEDLYDKLTSAGVKTILDDRAERFGPKIADFELVGFPVCVIVGKKLKDGKVEVRDRRTGEKFEVEKDMALEKVMEIINN</sequence>
<reference key="1">
    <citation type="journal article" date="2009" name="PLoS Genet.">
        <title>Adaptations to submarine hydrothermal environments exemplified by the genome of Nautilia profundicola.</title>
        <authorList>
            <person name="Campbell B.J."/>
            <person name="Smith J.L."/>
            <person name="Hanson T.E."/>
            <person name="Klotz M.G."/>
            <person name="Stein L.Y."/>
            <person name="Lee C.K."/>
            <person name="Wu D."/>
            <person name="Robinson J.M."/>
            <person name="Khouri H.M."/>
            <person name="Eisen J.A."/>
            <person name="Cary S.C."/>
        </authorList>
    </citation>
    <scope>NUCLEOTIDE SEQUENCE [LARGE SCALE GENOMIC DNA]</scope>
    <source>
        <strain>ATCC BAA-1463 / DSM 18972 / AmH</strain>
    </source>
</reference>
<evidence type="ECO:0000255" key="1">
    <source>
        <dbReference type="HAMAP-Rule" id="MF_01569"/>
    </source>
</evidence>